<accession>Q86XR2</accession>
<accession>B4DNU3</accession>
<accession>B4DVN7</accession>
<accession>Q7Z6H6</accession>
<accession>Q86XR3</accession>
<accession>Q86XR4</accession>
<accession>Q8TEQ3</accession>
<protein>
    <recommendedName>
        <fullName evidence="10">Protein Niban 3</fullName>
    </recommendedName>
    <alternativeName>
        <fullName evidence="7">B-cell novel protein 1</fullName>
    </alternativeName>
    <alternativeName>
        <fullName evidence="10">Niban-like protein 2</fullName>
    </alternativeName>
    <alternativeName>
        <fullName>Protein FAM129C</fullName>
    </alternativeName>
</protein>
<dbReference type="EMBL" id="AY254197">
    <property type="protein sequence ID" value="AAO83574.1"/>
    <property type="molecule type" value="mRNA"/>
</dbReference>
<dbReference type="EMBL" id="AY254198">
    <property type="protein sequence ID" value="AAO83575.1"/>
    <property type="molecule type" value="mRNA"/>
</dbReference>
<dbReference type="EMBL" id="AY254199">
    <property type="protein sequence ID" value="AAO83576.1"/>
    <property type="molecule type" value="mRNA"/>
</dbReference>
<dbReference type="EMBL" id="AK298062">
    <property type="protein sequence ID" value="BAG60355.1"/>
    <property type="molecule type" value="mRNA"/>
</dbReference>
<dbReference type="EMBL" id="AK301159">
    <property type="protein sequence ID" value="BAG62749.1"/>
    <property type="status" value="ALT_INIT"/>
    <property type="molecule type" value="mRNA"/>
</dbReference>
<dbReference type="EMBL" id="AC010618">
    <property type="status" value="NOT_ANNOTATED_CDS"/>
    <property type="molecule type" value="Genomic_DNA"/>
</dbReference>
<dbReference type="EMBL" id="AK074069">
    <property type="protein sequence ID" value="BAB84895.1"/>
    <property type="molecule type" value="mRNA"/>
</dbReference>
<dbReference type="EMBL" id="BC053606">
    <property type="protein sequence ID" value="AAH53606.1"/>
    <property type="molecule type" value="mRNA"/>
</dbReference>
<dbReference type="CCDS" id="CCDS12362.1">
    <molecule id="Q86XR2-1"/>
</dbReference>
<dbReference type="CCDS" id="CCDS42521.1">
    <molecule id="Q86XR2-3"/>
</dbReference>
<dbReference type="CCDS" id="CCDS82317.1">
    <molecule id="Q86XR2-6"/>
</dbReference>
<dbReference type="RefSeq" id="NP_001091994.2">
    <molecule id="Q86XR2-3"/>
    <property type="nucleotide sequence ID" value="NM_001098524.2"/>
</dbReference>
<dbReference type="RefSeq" id="NP_001308756.1">
    <property type="nucleotide sequence ID" value="NM_001321827.1"/>
</dbReference>
<dbReference type="RefSeq" id="NP_001308757.1">
    <molecule id="Q86XR2-6"/>
    <property type="nucleotide sequence ID" value="NM_001321828.1"/>
</dbReference>
<dbReference type="RefSeq" id="NP_775815.2">
    <molecule id="Q86XR2-1"/>
    <property type="nucleotide sequence ID" value="NM_173544.4"/>
</dbReference>
<dbReference type="SMR" id="Q86XR2"/>
<dbReference type="BioGRID" id="128274">
    <property type="interactions" value="3"/>
</dbReference>
<dbReference type="FunCoup" id="Q86XR2">
    <property type="interactions" value="11"/>
</dbReference>
<dbReference type="IntAct" id="Q86XR2">
    <property type="interactions" value="8"/>
</dbReference>
<dbReference type="STRING" id="9606.ENSP00000335040"/>
<dbReference type="GlyGen" id="Q86XR2">
    <property type="glycosylation" value="1 site, 1 O-linked glycan (1 site)"/>
</dbReference>
<dbReference type="iPTMnet" id="Q86XR2"/>
<dbReference type="PhosphoSitePlus" id="Q86XR2"/>
<dbReference type="BioMuta" id="FAM129C"/>
<dbReference type="DMDM" id="317373397"/>
<dbReference type="jPOST" id="Q86XR2"/>
<dbReference type="MassIVE" id="Q86XR2"/>
<dbReference type="PaxDb" id="9606-ENSP00000335040"/>
<dbReference type="PeptideAtlas" id="Q86XR2"/>
<dbReference type="ProteomicsDB" id="4725"/>
<dbReference type="ProteomicsDB" id="70316">
    <molecule id="Q86XR2-1"/>
</dbReference>
<dbReference type="ProteomicsDB" id="70317">
    <molecule id="Q86XR2-2"/>
</dbReference>
<dbReference type="ProteomicsDB" id="70318">
    <molecule id="Q86XR2-3"/>
</dbReference>
<dbReference type="ProteomicsDB" id="70319">
    <molecule id="Q86XR2-4"/>
</dbReference>
<dbReference type="ProteomicsDB" id="70320">
    <molecule id="Q86XR2-5"/>
</dbReference>
<dbReference type="Antibodypedia" id="27719">
    <property type="antibodies" value="49 antibodies from 10 providers"/>
</dbReference>
<dbReference type="DNASU" id="199786"/>
<dbReference type="Ensembl" id="ENST00000332386.9">
    <molecule id="Q86XR2-3"/>
    <property type="protein sequence ID" value="ENSP00000333447.4"/>
    <property type="gene ID" value="ENSG00000167483.19"/>
</dbReference>
<dbReference type="Ensembl" id="ENST00000335393.8">
    <molecule id="Q86XR2-1"/>
    <property type="protein sequence ID" value="ENSP00000335040.3"/>
    <property type="gene ID" value="ENSG00000167483.19"/>
</dbReference>
<dbReference type="Ensembl" id="ENST00000449408.6">
    <molecule id="Q86XR2-6"/>
    <property type="protein sequence ID" value="ENSP00000394929.2"/>
    <property type="gene ID" value="ENSG00000167483.19"/>
</dbReference>
<dbReference type="Ensembl" id="ENST00000595684.5">
    <molecule id="Q86XR2-2"/>
    <property type="protein sequence ID" value="ENSP00000470106.1"/>
    <property type="gene ID" value="ENSG00000167483.19"/>
</dbReference>
<dbReference type="GeneID" id="199786"/>
<dbReference type="KEGG" id="hsa:199786"/>
<dbReference type="UCSC" id="uc060vkb.1">
    <molecule id="Q86XR2-1"/>
    <property type="organism name" value="human"/>
</dbReference>
<dbReference type="AGR" id="HGNC:24130"/>
<dbReference type="CTD" id="199786"/>
<dbReference type="DisGeNET" id="199786"/>
<dbReference type="GeneCards" id="NIBAN3"/>
<dbReference type="HGNC" id="HGNC:24130">
    <property type="gene designation" value="NIBAN3"/>
</dbReference>
<dbReference type="HPA" id="ENSG00000167483">
    <property type="expression patterns" value="Group enriched (bone marrow, intestine, lymphoid tissue)"/>
</dbReference>
<dbReference type="MIM" id="609967">
    <property type="type" value="gene"/>
</dbReference>
<dbReference type="neXtProt" id="NX_Q86XR2"/>
<dbReference type="OpenTargets" id="ENSG00000167483"/>
<dbReference type="PharmGKB" id="PA162386017"/>
<dbReference type="VEuPathDB" id="HostDB:ENSG00000167483"/>
<dbReference type="eggNOG" id="ENOG502QV2S">
    <property type="taxonomic scope" value="Eukaryota"/>
</dbReference>
<dbReference type="GeneTree" id="ENSGT00940000154149"/>
<dbReference type="HOGENOM" id="CLU_648840_0_0_1"/>
<dbReference type="InParanoid" id="Q86XR2"/>
<dbReference type="OrthoDB" id="9412522at2759"/>
<dbReference type="PAN-GO" id="Q86XR2">
    <property type="GO annotations" value="0 GO annotations based on evolutionary models"/>
</dbReference>
<dbReference type="PhylomeDB" id="Q86XR2"/>
<dbReference type="TreeFam" id="TF333351"/>
<dbReference type="PathwayCommons" id="Q86XR2"/>
<dbReference type="SignaLink" id="Q86XR2"/>
<dbReference type="BioGRID-ORCS" id="199786">
    <property type="hits" value="19 hits in 1138 CRISPR screens"/>
</dbReference>
<dbReference type="GenomeRNAi" id="199786"/>
<dbReference type="Pharos" id="Q86XR2">
    <property type="development level" value="Tdark"/>
</dbReference>
<dbReference type="PRO" id="PR:Q86XR2"/>
<dbReference type="Proteomes" id="UP000005640">
    <property type="component" value="Chromosome 19"/>
</dbReference>
<dbReference type="RNAct" id="Q86XR2">
    <property type="molecule type" value="protein"/>
</dbReference>
<dbReference type="Bgee" id="ENSG00000167483">
    <property type="expression patterns" value="Expressed in spleen and 140 other cell types or tissues"/>
</dbReference>
<dbReference type="ExpressionAtlas" id="Q86XR2">
    <property type="expression patterns" value="baseline and differential"/>
</dbReference>
<dbReference type="CDD" id="cd23949">
    <property type="entry name" value="Niban-like"/>
    <property type="match status" value="1"/>
</dbReference>
<dbReference type="Gene3D" id="2.30.29.30">
    <property type="entry name" value="Pleckstrin-homology domain (PH domain)/Phosphotyrosine-binding domain (PTB)"/>
    <property type="match status" value="1"/>
</dbReference>
<dbReference type="InterPro" id="IPR026088">
    <property type="entry name" value="Niban-like"/>
</dbReference>
<dbReference type="InterPro" id="IPR011993">
    <property type="entry name" value="PH-like_dom_sf"/>
</dbReference>
<dbReference type="InterPro" id="IPR001849">
    <property type="entry name" value="PH_domain"/>
</dbReference>
<dbReference type="PANTHER" id="PTHR14392">
    <property type="entry name" value="NIBAN FAMILY MEMBER"/>
    <property type="match status" value="1"/>
</dbReference>
<dbReference type="PANTHER" id="PTHR14392:SF4">
    <property type="entry name" value="PROTEIN NIBAN 3"/>
    <property type="match status" value="1"/>
</dbReference>
<dbReference type="SMART" id="SM00233">
    <property type="entry name" value="PH"/>
    <property type="match status" value="1"/>
</dbReference>
<dbReference type="SUPFAM" id="SSF50729">
    <property type="entry name" value="PH domain-like"/>
    <property type="match status" value="1"/>
</dbReference>
<gene>
    <name evidence="11" type="primary">NIBAN3</name>
    <name evidence="7" type="synonym">BCNP1</name>
    <name type="synonym">FAM129C</name>
</gene>
<keyword id="KW-0025">Alternative splicing</keyword>
<keyword id="KW-1267">Proteomics identification</keyword>
<keyword id="KW-1185">Reference proteome</keyword>
<sequence>MGPDRKEVPLSRGTQAVVVGKGRGAPGDDSSMGGRPSSPLDKQQRQHLRGQVDTLLRNFLPCYRGQLAASVLRQISRELGPQEPTGSQLLRSKKLPRVREHRGPLTQLRGHPPRWQPIFCVLRGDGRLEWFSHKEEYENGGHCLGSTALTGYTLLTSQREYLRLLDALCPESLGDHTQEEPDSLLEVPVSFPLFLQHPFRRHLCFSAATREAQHAWRLALQGGIRLQGIVLQRSQAPAARAFLDAVRLYRQHQGHFGDDDVTLGSDAEVLTAVLMREQLPALRAQTLPGLRGAGRARAWAWTELLDAVHAAVLAGASAGLCAFQPEKDELLASLEKTIRPDVDQLLRQRARVAGRLRTDIRGPLESCLRREVDPQLPRVVQTLLRTVEASLEAVRTLLAQGMDRLSHRLRQSPSGTRLRREVYSFGEMPWDLALMQTCYREAERSRGRLGQLAAPFGFLGMQSLVFGAQDLAQQLMADAVATFLQLADQCLTTALNCDQAAQRLERVRGRVLKKFKSDSGLAQRRFIRGWGLCIFLPFVLSQLEPGCKKELPEFEGDVLAVGSQALTTEGIYEDVIRGCLLQRIDQELKKTLGANDVSCTLDGCLEVPWEQEGAAPNLNLVSSFLAGRQAFTDFLCLPAKSSANWILAASLLSCSCFRSGFHRDSRVFLVQLAEGLSHSLETVSSHSVWSFRPTPRQ</sequence>
<proteinExistence type="evidence at protein level"/>
<evidence type="ECO:0000256" key="1">
    <source>
        <dbReference type="SAM" id="MobiDB-lite"/>
    </source>
</evidence>
<evidence type="ECO:0000269" key="2">
    <source>
    </source>
</evidence>
<evidence type="ECO:0000269" key="3">
    <source>
    </source>
</evidence>
<evidence type="ECO:0000269" key="4">
    <source>
    </source>
</evidence>
<evidence type="ECO:0000269" key="5">
    <source>
    </source>
</evidence>
<evidence type="ECO:0000303" key="6">
    <source>
    </source>
</evidence>
<evidence type="ECO:0000303" key="7">
    <source>
    </source>
</evidence>
<evidence type="ECO:0000303" key="8">
    <source>
    </source>
</evidence>
<evidence type="ECO:0000303" key="9">
    <source>
    </source>
</evidence>
<evidence type="ECO:0000305" key="10"/>
<evidence type="ECO:0000312" key="11">
    <source>
        <dbReference type="MIM" id="609967"/>
    </source>
</evidence>
<comment type="interaction">
    <interactant intactId="EBI-2796690">
        <id>Q86XR2</id>
    </interactant>
    <interactant intactId="EBI-747185">
        <id>O95817</id>
        <label>BAG3</label>
    </interactant>
    <organismsDiffer>false</organismsDiffer>
    <experiments>3</experiments>
</comment>
<comment type="interaction">
    <interactant intactId="EBI-2796690">
        <id>Q86XR2</id>
    </interactant>
    <interactant intactId="EBI-724076">
        <id>Q99750</id>
        <label>MDFI</label>
    </interactant>
    <organismsDiffer>false</organismsDiffer>
    <experiments>3</experiments>
</comment>
<comment type="alternative products">
    <event type="alternative splicing"/>
    <isoform>
        <id>Q86XR2-1</id>
        <name>1</name>
        <name>3</name>
        <sequence type="displayed"/>
    </isoform>
    <isoform>
        <id>Q86XR2-2</id>
        <name>2</name>
        <name>1</name>
        <sequence type="described" ref="VSP_032129"/>
    </isoform>
    <isoform>
        <id>Q86XR2-3</id>
        <name>3</name>
        <name>2</name>
        <sequence type="described" ref="VSP_032130 VSP_032131"/>
    </isoform>
    <isoform>
        <id>Q86XR2-4</id>
        <name>4</name>
        <sequence type="described" ref="VSP_032126 VSP_032130 VSP_032131"/>
    </isoform>
    <isoform>
        <id>Q86XR2-5</id>
        <name>5</name>
        <sequence type="described" ref="VSP_032127 VSP_032128"/>
    </isoform>
    <isoform>
        <id>Q86XR2-6</id>
        <name>6</name>
        <sequence type="described" ref="VSP_054124"/>
    </isoform>
    <isoform>
        <id>Q86XR2-7</id>
        <name>7</name>
        <sequence type="described" ref="VSP_054125 VSP_054126 VSP_032130 VSP_032131"/>
    </isoform>
</comment>
<comment type="tissue specificity">
    <text evidence="3">Specifically expressed in B-lymphocytes.</text>
</comment>
<comment type="similarity">
    <text evidence="10">Belongs to the Niban family.</text>
</comment>
<comment type="sequence caution" evidence="10">
    <conflict type="erroneous initiation">
        <sequence resource="EMBL-CDS" id="BAG62749"/>
    </conflict>
    <text>Truncated N-terminus.</text>
</comment>
<name>NIBA3_HUMAN</name>
<organism>
    <name type="scientific">Homo sapiens</name>
    <name type="common">Human</name>
    <dbReference type="NCBI Taxonomy" id="9606"/>
    <lineage>
        <taxon>Eukaryota</taxon>
        <taxon>Metazoa</taxon>
        <taxon>Chordata</taxon>
        <taxon>Craniata</taxon>
        <taxon>Vertebrata</taxon>
        <taxon>Euteleostomi</taxon>
        <taxon>Mammalia</taxon>
        <taxon>Eutheria</taxon>
        <taxon>Euarchontoglires</taxon>
        <taxon>Primates</taxon>
        <taxon>Haplorrhini</taxon>
        <taxon>Catarrhini</taxon>
        <taxon>Hominidae</taxon>
        <taxon>Homo</taxon>
    </lineage>
</organism>
<reference key="1">
    <citation type="journal article" date="2003" name="Leukemia">
        <title>Proteomic analysis of the cell-surface membrane in chronic lymphocytic leukemia: identification of two novel proteins, BCNP1 and MIG2B.</title>
        <authorList>
            <person name="Boyd R.S."/>
            <person name="Adam P.J."/>
            <person name="Patel S."/>
            <person name="Loader J.A."/>
            <person name="Berry J."/>
            <person name="Redpath N.T."/>
            <person name="Poyser H.R."/>
            <person name="Fletcher G.C."/>
            <person name="Burgess N.A."/>
            <person name="Stamps A.C."/>
            <person name="Hudson L."/>
            <person name="Smith P."/>
            <person name="Griffiths M."/>
            <person name="Willis T.G."/>
            <person name="Karran E.L."/>
            <person name="Oscier D.G."/>
            <person name="Catovsky D."/>
            <person name="Terrett J.A."/>
            <person name="Dyer M.J.S."/>
        </authorList>
    </citation>
    <scope>NUCLEOTIDE SEQUENCE [MRNA] (ISOFORMS 1; 2 AND 3)</scope>
    <scope>IDENTIFICATION BY MASS SPECTROMETRY</scope>
    <scope>TISSUE SPECIFICITY</scope>
    <scope>VARIANT THR-229</scope>
</reference>
<reference key="2">
    <citation type="journal article" date="2004" name="Nat. Genet.">
        <title>Complete sequencing and characterization of 21,243 full-length human cDNAs.</title>
        <authorList>
            <person name="Ota T."/>
            <person name="Suzuki Y."/>
            <person name="Nishikawa T."/>
            <person name="Otsuki T."/>
            <person name="Sugiyama T."/>
            <person name="Irie R."/>
            <person name="Wakamatsu A."/>
            <person name="Hayashi K."/>
            <person name="Sato H."/>
            <person name="Nagai K."/>
            <person name="Kimura K."/>
            <person name="Makita H."/>
            <person name="Sekine M."/>
            <person name="Obayashi M."/>
            <person name="Nishi T."/>
            <person name="Shibahara T."/>
            <person name="Tanaka T."/>
            <person name="Ishii S."/>
            <person name="Yamamoto J."/>
            <person name="Saito K."/>
            <person name="Kawai Y."/>
            <person name="Isono Y."/>
            <person name="Nakamura Y."/>
            <person name="Nagahari K."/>
            <person name="Murakami K."/>
            <person name="Yasuda T."/>
            <person name="Iwayanagi T."/>
            <person name="Wagatsuma M."/>
            <person name="Shiratori A."/>
            <person name="Sudo H."/>
            <person name="Hosoiri T."/>
            <person name="Kaku Y."/>
            <person name="Kodaira H."/>
            <person name="Kondo H."/>
            <person name="Sugawara M."/>
            <person name="Takahashi M."/>
            <person name="Kanda K."/>
            <person name="Yokoi T."/>
            <person name="Furuya T."/>
            <person name="Kikkawa E."/>
            <person name="Omura Y."/>
            <person name="Abe K."/>
            <person name="Kamihara K."/>
            <person name="Katsuta N."/>
            <person name="Sato K."/>
            <person name="Tanikawa M."/>
            <person name="Yamazaki M."/>
            <person name="Ninomiya K."/>
            <person name="Ishibashi T."/>
            <person name="Yamashita H."/>
            <person name="Murakawa K."/>
            <person name="Fujimori K."/>
            <person name="Tanai H."/>
            <person name="Kimata M."/>
            <person name="Watanabe M."/>
            <person name="Hiraoka S."/>
            <person name="Chiba Y."/>
            <person name="Ishida S."/>
            <person name="Ono Y."/>
            <person name="Takiguchi S."/>
            <person name="Watanabe S."/>
            <person name="Yosida M."/>
            <person name="Hotuta T."/>
            <person name="Kusano J."/>
            <person name="Kanehori K."/>
            <person name="Takahashi-Fujii A."/>
            <person name="Hara H."/>
            <person name="Tanase T.-O."/>
            <person name="Nomura Y."/>
            <person name="Togiya S."/>
            <person name="Komai F."/>
            <person name="Hara R."/>
            <person name="Takeuchi K."/>
            <person name="Arita M."/>
            <person name="Imose N."/>
            <person name="Musashino K."/>
            <person name="Yuuki H."/>
            <person name="Oshima A."/>
            <person name="Sasaki N."/>
            <person name="Aotsuka S."/>
            <person name="Yoshikawa Y."/>
            <person name="Matsunawa H."/>
            <person name="Ichihara T."/>
            <person name="Shiohata N."/>
            <person name="Sano S."/>
            <person name="Moriya S."/>
            <person name="Momiyama H."/>
            <person name="Satoh N."/>
            <person name="Takami S."/>
            <person name="Terashima Y."/>
            <person name="Suzuki O."/>
            <person name="Nakagawa S."/>
            <person name="Senoh A."/>
            <person name="Mizoguchi H."/>
            <person name="Goto Y."/>
            <person name="Shimizu F."/>
            <person name="Wakebe H."/>
            <person name="Hishigaki H."/>
            <person name="Watanabe T."/>
            <person name="Sugiyama A."/>
            <person name="Takemoto M."/>
            <person name="Kawakami B."/>
            <person name="Yamazaki M."/>
            <person name="Watanabe K."/>
            <person name="Kumagai A."/>
            <person name="Itakura S."/>
            <person name="Fukuzumi Y."/>
            <person name="Fujimori Y."/>
            <person name="Komiyama M."/>
            <person name="Tashiro H."/>
            <person name="Tanigami A."/>
            <person name="Fujiwara T."/>
            <person name="Ono T."/>
            <person name="Yamada K."/>
            <person name="Fujii Y."/>
            <person name="Ozaki K."/>
            <person name="Hirao M."/>
            <person name="Ohmori Y."/>
            <person name="Kawabata A."/>
            <person name="Hikiji T."/>
            <person name="Kobatake N."/>
            <person name="Inagaki H."/>
            <person name="Ikema Y."/>
            <person name="Okamoto S."/>
            <person name="Okitani R."/>
            <person name="Kawakami T."/>
            <person name="Noguchi S."/>
            <person name="Itoh T."/>
            <person name="Shigeta K."/>
            <person name="Senba T."/>
            <person name="Matsumura K."/>
            <person name="Nakajima Y."/>
            <person name="Mizuno T."/>
            <person name="Morinaga M."/>
            <person name="Sasaki M."/>
            <person name="Togashi T."/>
            <person name="Oyama M."/>
            <person name="Hata H."/>
            <person name="Watanabe M."/>
            <person name="Komatsu T."/>
            <person name="Mizushima-Sugano J."/>
            <person name="Satoh T."/>
            <person name="Shirai Y."/>
            <person name="Takahashi Y."/>
            <person name="Nakagawa K."/>
            <person name="Okumura K."/>
            <person name="Nagase T."/>
            <person name="Nomura N."/>
            <person name="Kikuchi H."/>
            <person name="Masuho Y."/>
            <person name="Yamashita R."/>
            <person name="Nakai K."/>
            <person name="Yada T."/>
            <person name="Nakamura Y."/>
            <person name="Ohara O."/>
            <person name="Isogai T."/>
            <person name="Sugano S."/>
        </authorList>
    </citation>
    <scope>NUCLEOTIDE SEQUENCE [LARGE SCALE MRNA] (ISOFORM 6)</scope>
    <scope>NUCLEOTIDE SEQUENCE [LARGE SCALE MRNA] OF 16-569 (ISOFORM 7)</scope>
    <scope>VARIANT THR-229</scope>
    <source>
        <tissue>Lung</tissue>
        <tissue>Spleen</tissue>
    </source>
</reference>
<reference key="3">
    <citation type="journal article" date="2004" name="Nature">
        <title>The DNA sequence and biology of human chromosome 19.</title>
        <authorList>
            <person name="Grimwood J."/>
            <person name="Gordon L.A."/>
            <person name="Olsen A.S."/>
            <person name="Terry A."/>
            <person name="Schmutz J."/>
            <person name="Lamerdin J.E."/>
            <person name="Hellsten U."/>
            <person name="Goodstein D."/>
            <person name="Couronne O."/>
            <person name="Tran-Gyamfi M."/>
            <person name="Aerts A."/>
            <person name="Altherr M."/>
            <person name="Ashworth L."/>
            <person name="Bajorek E."/>
            <person name="Black S."/>
            <person name="Branscomb E."/>
            <person name="Caenepeel S."/>
            <person name="Carrano A.V."/>
            <person name="Caoile C."/>
            <person name="Chan Y.M."/>
            <person name="Christensen M."/>
            <person name="Cleland C.A."/>
            <person name="Copeland A."/>
            <person name="Dalin E."/>
            <person name="Dehal P."/>
            <person name="Denys M."/>
            <person name="Detter J.C."/>
            <person name="Escobar J."/>
            <person name="Flowers D."/>
            <person name="Fotopulos D."/>
            <person name="Garcia C."/>
            <person name="Georgescu A.M."/>
            <person name="Glavina T."/>
            <person name="Gomez M."/>
            <person name="Gonzales E."/>
            <person name="Groza M."/>
            <person name="Hammon N."/>
            <person name="Hawkins T."/>
            <person name="Haydu L."/>
            <person name="Ho I."/>
            <person name="Huang W."/>
            <person name="Israni S."/>
            <person name="Jett J."/>
            <person name="Kadner K."/>
            <person name="Kimball H."/>
            <person name="Kobayashi A."/>
            <person name="Larionov V."/>
            <person name="Leem S.-H."/>
            <person name="Lopez F."/>
            <person name="Lou Y."/>
            <person name="Lowry S."/>
            <person name="Malfatti S."/>
            <person name="Martinez D."/>
            <person name="McCready P.M."/>
            <person name="Medina C."/>
            <person name="Morgan J."/>
            <person name="Nelson K."/>
            <person name="Nolan M."/>
            <person name="Ovcharenko I."/>
            <person name="Pitluck S."/>
            <person name="Pollard M."/>
            <person name="Popkie A.P."/>
            <person name="Predki P."/>
            <person name="Quan G."/>
            <person name="Ramirez L."/>
            <person name="Rash S."/>
            <person name="Retterer J."/>
            <person name="Rodriguez A."/>
            <person name="Rogers S."/>
            <person name="Salamov A."/>
            <person name="Salazar A."/>
            <person name="She X."/>
            <person name="Smith D."/>
            <person name="Slezak T."/>
            <person name="Solovyev V."/>
            <person name="Thayer N."/>
            <person name="Tice H."/>
            <person name="Tsai M."/>
            <person name="Ustaszewska A."/>
            <person name="Vo N."/>
            <person name="Wagner M."/>
            <person name="Wheeler J."/>
            <person name="Wu K."/>
            <person name="Xie G."/>
            <person name="Yang J."/>
            <person name="Dubchak I."/>
            <person name="Furey T.S."/>
            <person name="DeJong P."/>
            <person name="Dickson M."/>
            <person name="Gordon D."/>
            <person name="Eichler E.E."/>
            <person name="Pennacchio L.A."/>
            <person name="Richardson P."/>
            <person name="Stubbs L."/>
            <person name="Rokhsar D.S."/>
            <person name="Myers R.M."/>
            <person name="Rubin E.M."/>
            <person name="Lucas S.M."/>
        </authorList>
    </citation>
    <scope>NUCLEOTIDE SEQUENCE [LARGE SCALE GENOMIC DNA]</scope>
</reference>
<reference key="4">
    <citation type="journal article" date="2003" name="DNA Res.">
        <title>Characterization of long cDNA clones from human adult spleen. II. The complete sequences of 81 cDNA clones.</title>
        <authorList>
            <person name="Jikuya H."/>
            <person name="Takano J."/>
            <person name="Kikuno R."/>
            <person name="Hirosawa M."/>
            <person name="Nagase T."/>
            <person name="Nomura N."/>
            <person name="Ohara O."/>
        </authorList>
    </citation>
    <scope>NUCLEOTIDE SEQUENCE [LARGE SCALE MRNA] OF 15-697 (ISOFORM 5)</scope>
    <scope>VARIANT THR-229</scope>
    <source>
        <tissue>Spleen</tissue>
    </source>
</reference>
<reference key="5">
    <citation type="journal article" date="2004" name="Genome Res.">
        <title>The status, quality, and expansion of the NIH full-length cDNA project: the Mammalian Gene Collection (MGC).</title>
        <authorList>
            <consortium name="The MGC Project Team"/>
        </authorList>
    </citation>
    <scope>NUCLEOTIDE SEQUENCE [LARGE SCALE MRNA] OF 20-697 (ISOFORM 4)</scope>
    <scope>VARIANT THR-229</scope>
    <source>
        <tissue>Testis</tissue>
    </source>
</reference>
<feature type="chain" id="PRO_0000323759" description="Protein Niban 3">
    <location>
        <begin position="1"/>
        <end position="697"/>
    </location>
</feature>
<feature type="region of interest" description="Disordered" evidence="1">
    <location>
        <begin position="1"/>
        <end position="48"/>
    </location>
</feature>
<feature type="splice variant" id="VSP_054124" description="In isoform 6." evidence="8">
    <location>
        <begin position="1"/>
        <end position="274"/>
    </location>
</feature>
<feature type="splice variant" id="VSP_054125" description="In isoform 7." evidence="8">
    <location>
        <begin position="72"/>
        <end position="94"/>
    </location>
</feature>
<feature type="splice variant" id="VSP_032126" description="In isoform 4." evidence="9">
    <location>
        <begin position="513"/>
        <end position="548"/>
    </location>
</feature>
<feature type="splice variant" id="VSP_032127" description="In isoform 5." evidence="6">
    <original>ELPEFEGDVLAVGSQALTTEGIYEDVIRGCLLQRIDQELKKTLG</original>
    <variation>TESRSVAQAVVQWCDLGSLRPPPPRFKRSSHLGLPSSWDYRHPL</variation>
    <location>
        <begin position="550"/>
        <end position="593"/>
    </location>
</feature>
<feature type="splice variant" id="VSP_054126" description="In isoform 7." evidence="8">
    <location>
        <begin position="587"/>
        <end position="614"/>
    </location>
</feature>
<feature type="splice variant" id="VSP_032128" description="In isoform 5." evidence="6">
    <location>
        <begin position="594"/>
        <end position="697"/>
    </location>
</feature>
<feature type="splice variant" id="VSP_032129" description="In isoform 2." evidence="7">
    <original>APNLNLVSSFLAGRQAFTDFLCLPAKSSANWILAASLLSCSCFRSGFHRDSRVFLVQLAEGLSHSLETVSSHSVWSFRPTPRQ</original>
    <variation>GGELHRLLKHASDCWGWGGGGPHGVYGIVMSVGSWTEQNALCLLTQPAWPSS</variation>
    <location>
        <begin position="615"/>
        <end position="697"/>
    </location>
</feature>
<feature type="splice variant" id="VSP_032130" description="In isoform 3, isoform 4 and isoform 7." evidence="7 8 9">
    <original>APNLNLVSSFLAGRQAFTDFLCLPAKSSANWILAASL</original>
    <variation>DEETEAEREGGACPRQPDSGAQIQPLCPPPSPGTFRS</variation>
    <location>
        <begin position="615"/>
        <end position="651"/>
    </location>
</feature>
<feature type="splice variant" id="VSP_032131" description="In isoform 3, isoform 4 and isoform 7." evidence="7 8 9">
    <location>
        <begin position="652"/>
        <end position="697"/>
    </location>
</feature>
<feature type="sequence variant" id="VAR_039583" description="In dbSNP:rs8107859." evidence="2 3 4 5">
    <original>I</original>
    <variation>T</variation>
    <location>
        <position position="229"/>
    </location>
</feature>
<feature type="sequence variant" id="VAR_062126" description="In dbSNP:rs45532635.">
    <original>T</original>
    <variation>M</variation>
    <location>
        <position position="493"/>
    </location>
</feature>
<feature type="sequence variant" id="VAR_039584" description="In dbSNP:rs10401716.">
    <original>L</original>
    <variation>F</variation>
    <location>
        <position position="543"/>
    </location>
</feature>
<feature type="sequence variant" id="VAR_039585" description="In dbSNP:rs11666267.">
    <original>G</original>
    <variation>S</variation>
    <location>
        <position position="603"/>
    </location>
</feature>
<feature type="sequence conflict" description="In Ref. 2; BAG62749." evidence="10" ref="2">
    <original>P</original>
    <variation>S</variation>
    <location sequence="Q86XR2-7">
        <position position="591"/>
    </location>
</feature>